<name>MTNB_PSET1</name>
<gene>
    <name evidence="1" type="primary">mtnB</name>
    <name type="ordered locus">PSHAa2922</name>
</gene>
<protein>
    <recommendedName>
        <fullName evidence="1">Methylthioribulose-1-phosphate dehydratase</fullName>
        <shortName evidence="1">MTRu-1-P dehydratase</shortName>
        <ecNumber evidence="1">4.2.1.109</ecNumber>
    </recommendedName>
</protein>
<accession>Q3IJW1</accession>
<dbReference type="EC" id="4.2.1.109" evidence="1"/>
<dbReference type="EMBL" id="CR954246">
    <property type="protein sequence ID" value="CAI87957.1"/>
    <property type="molecule type" value="Genomic_DNA"/>
</dbReference>
<dbReference type="SMR" id="Q3IJW1"/>
<dbReference type="STRING" id="326442.PSHAa2922"/>
<dbReference type="KEGG" id="pha:PSHAa2922"/>
<dbReference type="PATRIC" id="fig|326442.8.peg.2820"/>
<dbReference type="eggNOG" id="COG0235">
    <property type="taxonomic scope" value="Bacteria"/>
</dbReference>
<dbReference type="HOGENOM" id="CLU_006033_4_1_6"/>
<dbReference type="BioCyc" id="PHAL326442:PSHA_RS14355-MONOMER"/>
<dbReference type="UniPathway" id="UPA00904">
    <property type="reaction ID" value="UER00875"/>
</dbReference>
<dbReference type="Proteomes" id="UP000006843">
    <property type="component" value="Chromosome I"/>
</dbReference>
<dbReference type="GO" id="GO:0005737">
    <property type="term" value="C:cytoplasm"/>
    <property type="evidence" value="ECO:0007669"/>
    <property type="project" value="InterPro"/>
</dbReference>
<dbReference type="GO" id="GO:0046570">
    <property type="term" value="F:methylthioribulose 1-phosphate dehydratase activity"/>
    <property type="evidence" value="ECO:0007669"/>
    <property type="project" value="UniProtKB-UniRule"/>
</dbReference>
<dbReference type="GO" id="GO:0008270">
    <property type="term" value="F:zinc ion binding"/>
    <property type="evidence" value="ECO:0007669"/>
    <property type="project" value="UniProtKB-UniRule"/>
</dbReference>
<dbReference type="GO" id="GO:0019509">
    <property type="term" value="P:L-methionine salvage from methylthioadenosine"/>
    <property type="evidence" value="ECO:0007669"/>
    <property type="project" value="UniProtKB-UniRule"/>
</dbReference>
<dbReference type="GO" id="GO:0005996">
    <property type="term" value="P:monosaccharide metabolic process"/>
    <property type="evidence" value="ECO:0007669"/>
    <property type="project" value="UniProtKB-ARBA"/>
</dbReference>
<dbReference type="Gene3D" id="3.40.225.10">
    <property type="entry name" value="Class II aldolase/adducin N-terminal domain"/>
    <property type="match status" value="1"/>
</dbReference>
<dbReference type="HAMAP" id="MF_01677">
    <property type="entry name" value="Salvage_MtnB"/>
    <property type="match status" value="1"/>
</dbReference>
<dbReference type="InterPro" id="IPR001303">
    <property type="entry name" value="Aldolase_II/adducin_N"/>
</dbReference>
<dbReference type="InterPro" id="IPR036409">
    <property type="entry name" value="Aldolase_II/adducin_N_sf"/>
</dbReference>
<dbReference type="InterPro" id="IPR017714">
    <property type="entry name" value="MethylthioRu-1-P_deHdtase_MtnB"/>
</dbReference>
<dbReference type="NCBIfam" id="NF006672">
    <property type="entry name" value="PRK09220.1"/>
    <property type="match status" value="1"/>
</dbReference>
<dbReference type="NCBIfam" id="TIGR03328">
    <property type="entry name" value="salvage_mtnB"/>
    <property type="match status" value="1"/>
</dbReference>
<dbReference type="PANTHER" id="PTHR10640">
    <property type="entry name" value="METHYLTHIORIBULOSE-1-PHOSPHATE DEHYDRATASE"/>
    <property type="match status" value="1"/>
</dbReference>
<dbReference type="PANTHER" id="PTHR10640:SF7">
    <property type="entry name" value="METHYLTHIORIBULOSE-1-PHOSPHATE DEHYDRATASE"/>
    <property type="match status" value="1"/>
</dbReference>
<dbReference type="Pfam" id="PF00596">
    <property type="entry name" value="Aldolase_II"/>
    <property type="match status" value="1"/>
</dbReference>
<dbReference type="SMART" id="SM01007">
    <property type="entry name" value="Aldolase_II"/>
    <property type="match status" value="1"/>
</dbReference>
<dbReference type="SUPFAM" id="SSF53639">
    <property type="entry name" value="AraD/HMP-PK domain-like"/>
    <property type="match status" value="1"/>
</dbReference>
<reference key="1">
    <citation type="journal article" date="2005" name="Genome Res.">
        <title>Coping with cold: the genome of the versatile marine Antarctica bacterium Pseudoalteromonas haloplanktis TAC125.</title>
        <authorList>
            <person name="Medigue C."/>
            <person name="Krin E."/>
            <person name="Pascal G."/>
            <person name="Barbe V."/>
            <person name="Bernsel A."/>
            <person name="Bertin P.N."/>
            <person name="Cheung F."/>
            <person name="Cruveiller S."/>
            <person name="D'Amico S."/>
            <person name="Duilio A."/>
            <person name="Fang G."/>
            <person name="Feller G."/>
            <person name="Ho C."/>
            <person name="Mangenot S."/>
            <person name="Marino G."/>
            <person name="Nilsson J."/>
            <person name="Parrilli E."/>
            <person name="Rocha E.P.C."/>
            <person name="Rouy Z."/>
            <person name="Sekowska A."/>
            <person name="Tutino M.L."/>
            <person name="Vallenet D."/>
            <person name="von Heijne G."/>
            <person name="Danchin A."/>
        </authorList>
    </citation>
    <scope>NUCLEOTIDE SEQUENCE [LARGE SCALE GENOMIC DNA]</scope>
    <source>
        <strain>TAC 125</strain>
    </source>
</reference>
<evidence type="ECO:0000255" key="1">
    <source>
        <dbReference type="HAMAP-Rule" id="MF_01677"/>
    </source>
</evidence>
<sequence>MQNNNTAISQLIEAGKWVSQKEWIPATGGNFSARTESGFVITASGQDKGKLTSEQFLQLDLQGKPLAGTKKRSAETQLHLSLYQLIPEAQCVLHTHSVAATVLSQITKSHKLDLTGYEMQKALTGFTSHLETLSIPIFNNDQDIDHLSLLVSDHHLHTPIEHGVLIRGHGLYAVGRNIDEVRRHLEVLEFLFSCELERLKITGIQASNNNK</sequence>
<comment type="function">
    <text evidence="1">Catalyzes the dehydration of methylthioribulose-1-phosphate (MTRu-1-P) into 2,3-diketo-5-methylthiopentyl-1-phosphate (DK-MTP-1-P).</text>
</comment>
<comment type="catalytic activity">
    <reaction evidence="1">
        <text>5-(methylsulfanyl)-D-ribulose 1-phosphate = 5-methylsulfanyl-2,3-dioxopentyl phosphate + H2O</text>
        <dbReference type="Rhea" id="RHEA:15549"/>
        <dbReference type="ChEBI" id="CHEBI:15377"/>
        <dbReference type="ChEBI" id="CHEBI:58548"/>
        <dbReference type="ChEBI" id="CHEBI:58828"/>
        <dbReference type="EC" id="4.2.1.109"/>
    </reaction>
</comment>
<comment type="cofactor">
    <cofactor evidence="1">
        <name>Zn(2+)</name>
        <dbReference type="ChEBI" id="CHEBI:29105"/>
    </cofactor>
    <text evidence="1">Binds 1 zinc ion per subunit.</text>
</comment>
<comment type="pathway">
    <text evidence="1">Amino-acid biosynthesis; L-methionine biosynthesis via salvage pathway; L-methionine from S-methyl-5-thio-alpha-D-ribose 1-phosphate: step 2/6.</text>
</comment>
<comment type="similarity">
    <text evidence="1">Belongs to the aldolase class II family. MtnB subfamily.</text>
</comment>
<organism>
    <name type="scientific">Pseudoalteromonas translucida (strain TAC 125)</name>
    <dbReference type="NCBI Taxonomy" id="326442"/>
    <lineage>
        <taxon>Bacteria</taxon>
        <taxon>Pseudomonadati</taxon>
        <taxon>Pseudomonadota</taxon>
        <taxon>Gammaproteobacteria</taxon>
        <taxon>Alteromonadales</taxon>
        <taxon>Pseudoalteromonadaceae</taxon>
        <taxon>Pseudoalteromonas</taxon>
    </lineage>
</organism>
<feature type="chain" id="PRO_0000357096" description="Methylthioribulose-1-phosphate dehydratase">
    <location>
        <begin position="1"/>
        <end position="211"/>
    </location>
</feature>
<feature type="binding site" evidence="1">
    <location>
        <position position="94"/>
    </location>
    <ligand>
        <name>Zn(2+)</name>
        <dbReference type="ChEBI" id="CHEBI:29105"/>
    </ligand>
</feature>
<feature type="binding site" evidence="1">
    <location>
        <position position="96"/>
    </location>
    <ligand>
        <name>Zn(2+)</name>
        <dbReference type="ChEBI" id="CHEBI:29105"/>
    </ligand>
</feature>
<proteinExistence type="inferred from homology"/>
<keyword id="KW-0028">Amino-acid biosynthesis</keyword>
<keyword id="KW-0456">Lyase</keyword>
<keyword id="KW-0479">Metal-binding</keyword>
<keyword id="KW-0486">Methionine biosynthesis</keyword>
<keyword id="KW-1185">Reference proteome</keyword>
<keyword id="KW-0862">Zinc</keyword>